<organism>
    <name type="scientific">Fusobacterium nucleatum subsp. nucleatum (strain ATCC 25586 / DSM 15643 / BCRC 10681 / CIP 101130 / JCM 8532 / KCTC 2640 / LMG 13131 / VPI 4355)</name>
    <dbReference type="NCBI Taxonomy" id="190304"/>
    <lineage>
        <taxon>Bacteria</taxon>
        <taxon>Fusobacteriati</taxon>
        <taxon>Fusobacteriota</taxon>
        <taxon>Fusobacteriia</taxon>
        <taxon>Fusobacteriales</taxon>
        <taxon>Fusobacteriaceae</taxon>
        <taxon>Fusobacterium</taxon>
    </lineage>
</organism>
<dbReference type="EC" id="2.8.1.13" evidence="1"/>
<dbReference type="EMBL" id="AE009951">
    <property type="protein sequence ID" value="AAL94961.1"/>
    <property type="molecule type" value="Genomic_DNA"/>
</dbReference>
<dbReference type="RefSeq" id="NP_603662.1">
    <property type="nucleotide sequence ID" value="NC_003454.1"/>
</dbReference>
<dbReference type="RefSeq" id="WP_011016634.1">
    <property type="nucleotide sequence ID" value="NZ_CP028101.1"/>
</dbReference>
<dbReference type="SMR" id="Q8R5X3"/>
<dbReference type="FunCoup" id="Q8R5X3">
    <property type="interactions" value="360"/>
</dbReference>
<dbReference type="STRING" id="190304.FN0765"/>
<dbReference type="PaxDb" id="190304-FN0765"/>
<dbReference type="EnsemblBacteria" id="AAL94961">
    <property type="protein sequence ID" value="AAL94961"/>
    <property type="gene ID" value="FN0765"/>
</dbReference>
<dbReference type="GeneID" id="79783756"/>
<dbReference type="KEGG" id="fnu:FN0765"/>
<dbReference type="PATRIC" id="fig|190304.8.peg.1328"/>
<dbReference type="eggNOG" id="COG0482">
    <property type="taxonomic scope" value="Bacteria"/>
</dbReference>
<dbReference type="HOGENOM" id="CLU_035188_0_0_0"/>
<dbReference type="InParanoid" id="Q8R5X3"/>
<dbReference type="BioCyc" id="FNUC190304:G1FZS-1350-MONOMER"/>
<dbReference type="Proteomes" id="UP000002521">
    <property type="component" value="Chromosome"/>
</dbReference>
<dbReference type="GO" id="GO:0005737">
    <property type="term" value="C:cytoplasm"/>
    <property type="evidence" value="ECO:0007669"/>
    <property type="project" value="UniProtKB-SubCell"/>
</dbReference>
<dbReference type="GO" id="GO:0005524">
    <property type="term" value="F:ATP binding"/>
    <property type="evidence" value="ECO:0007669"/>
    <property type="project" value="UniProtKB-KW"/>
</dbReference>
<dbReference type="GO" id="GO:0000049">
    <property type="term" value="F:tRNA binding"/>
    <property type="evidence" value="ECO:0007669"/>
    <property type="project" value="UniProtKB-KW"/>
</dbReference>
<dbReference type="GO" id="GO:0103016">
    <property type="term" value="F:tRNA-uridine 2-sulfurtransferase activity"/>
    <property type="evidence" value="ECO:0007669"/>
    <property type="project" value="UniProtKB-EC"/>
</dbReference>
<dbReference type="GO" id="GO:0002143">
    <property type="term" value="P:tRNA wobble position uridine thiolation"/>
    <property type="evidence" value="ECO:0000318"/>
    <property type="project" value="GO_Central"/>
</dbReference>
<dbReference type="CDD" id="cd01998">
    <property type="entry name" value="MnmA_TRMU-like"/>
    <property type="match status" value="1"/>
</dbReference>
<dbReference type="FunFam" id="2.30.30.280:FF:000001">
    <property type="entry name" value="tRNA-specific 2-thiouridylase MnmA"/>
    <property type="match status" value="1"/>
</dbReference>
<dbReference type="FunFam" id="3.40.50.620:FF:000637">
    <property type="entry name" value="tRNA-specific 2-thiouridylase MnmA 1"/>
    <property type="match status" value="1"/>
</dbReference>
<dbReference type="Gene3D" id="2.30.30.280">
    <property type="entry name" value="Adenine nucleotide alpha hydrolases-like domains"/>
    <property type="match status" value="1"/>
</dbReference>
<dbReference type="Gene3D" id="3.40.50.620">
    <property type="entry name" value="HUPs"/>
    <property type="match status" value="1"/>
</dbReference>
<dbReference type="Gene3D" id="2.40.30.10">
    <property type="entry name" value="Translation factors"/>
    <property type="match status" value="1"/>
</dbReference>
<dbReference type="HAMAP" id="MF_00144">
    <property type="entry name" value="tRNA_thiouridyl_MnmA"/>
    <property type="match status" value="1"/>
</dbReference>
<dbReference type="InterPro" id="IPR004506">
    <property type="entry name" value="MnmA-like"/>
</dbReference>
<dbReference type="InterPro" id="IPR046885">
    <property type="entry name" value="MnmA-like_C"/>
</dbReference>
<dbReference type="InterPro" id="IPR046884">
    <property type="entry name" value="MnmA-like_central"/>
</dbReference>
<dbReference type="InterPro" id="IPR023382">
    <property type="entry name" value="MnmA-like_central_sf"/>
</dbReference>
<dbReference type="InterPro" id="IPR014729">
    <property type="entry name" value="Rossmann-like_a/b/a_fold"/>
</dbReference>
<dbReference type="NCBIfam" id="NF001138">
    <property type="entry name" value="PRK00143.1"/>
    <property type="match status" value="1"/>
</dbReference>
<dbReference type="NCBIfam" id="TIGR00420">
    <property type="entry name" value="trmU"/>
    <property type="match status" value="1"/>
</dbReference>
<dbReference type="PANTHER" id="PTHR11933:SF5">
    <property type="entry name" value="MITOCHONDRIAL TRNA-SPECIFIC 2-THIOURIDYLASE 1"/>
    <property type="match status" value="1"/>
</dbReference>
<dbReference type="PANTHER" id="PTHR11933">
    <property type="entry name" value="TRNA 5-METHYLAMINOMETHYL-2-THIOURIDYLATE -METHYLTRANSFERASE"/>
    <property type="match status" value="1"/>
</dbReference>
<dbReference type="Pfam" id="PF03054">
    <property type="entry name" value="tRNA_Me_trans"/>
    <property type="match status" value="1"/>
</dbReference>
<dbReference type="Pfam" id="PF20258">
    <property type="entry name" value="tRNA_Me_trans_C"/>
    <property type="match status" value="1"/>
</dbReference>
<dbReference type="Pfam" id="PF20259">
    <property type="entry name" value="tRNA_Me_trans_M"/>
    <property type="match status" value="1"/>
</dbReference>
<dbReference type="SUPFAM" id="SSF52402">
    <property type="entry name" value="Adenine nucleotide alpha hydrolases-like"/>
    <property type="match status" value="1"/>
</dbReference>
<protein>
    <recommendedName>
        <fullName evidence="1">tRNA-specific 2-thiouridylase MnmA 1</fullName>
        <ecNumber evidence="1">2.8.1.13</ecNumber>
    </recommendedName>
</protein>
<gene>
    <name evidence="1" type="primary">mnmA1</name>
    <name type="ordered locus">FN0765</name>
</gene>
<accession>Q8R5X3</accession>
<name>MNMA1_FUSNN</name>
<keyword id="KW-0067">ATP-binding</keyword>
<keyword id="KW-0963">Cytoplasm</keyword>
<keyword id="KW-1015">Disulfide bond</keyword>
<keyword id="KW-0547">Nucleotide-binding</keyword>
<keyword id="KW-1185">Reference proteome</keyword>
<keyword id="KW-0694">RNA-binding</keyword>
<keyword id="KW-0808">Transferase</keyword>
<keyword id="KW-0819">tRNA processing</keyword>
<keyword id="KW-0820">tRNA-binding</keyword>
<sequence>MVETKSIAPEFKKYLKFDSNNSNIRVGVAMSGGVDSSTVAYLLKQQGYDIFGVTMKTFKDEDSDAKKVCDDLGIEHYILDVRDEFKEKVVDYFVNEYMNGRTPNPCMVCNRYIKFGKMLDFILSKDASFMATGHYTKLKNGLLSVGDDSNKDQVYFLSQIEKNKLSKIIFPVGDLEKTKLRELAEQLGVRVYSKKDSQEICFVDDGKLKQFLIENTKGKAEKPGNIVDKNGNILGKHKGFSFYTIGQRKGLGISSEEPLYVLAFDRKTNNIIVGQNEDLFRDELIATRLNLFSVSSLEGLDNLECFAKTRSRDILHKCLLKKDGDNFQVKFIDNKVRAITPGQGIVFYNNDGNVIAGGFIEK</sequence>
<proteinExistence type="inferred from homology"/>
<comment type="function">
    <text evidence="1">Catalyzes the 2-thiolation of uridine at the wobble position (U34) of tRNA, leading to the formation of s(2)U34.</text>
</comment>
<comment type="catalytic activity">
    <reaction evidence="1">
        <text>S-sulfanyl-L-cysteinyl-[protein] + uridine(34) in tRNA + AH2 + ATP = 2-thiouridine(34) in tRNA + L-cysteinyl-[protein] + A + AMP + diphosphate + H(+)</text>
        <dbReference type="Rhea" id="RHEA:47032"/>
        <dbReference type="Rhea" id="RHEA-COMP:10131"/>
        <dbReference type="Rhea" id="RHEA-COMP:11726"/>
        <dbReference type="Rhea" id="RHEA-COMP:11727"/>
        <dbReference type="Rhea" id="RHEA-COMP:11728"/>
        <dbReference type="ChEBI" id="CHEBI:13193"/>
        <dbReference type="ChEBI" id="CHEBI:15378"/>
        <dbReference type="ChEBI" id="CHEBI:17499"/>
        <dbReference type="ChEBI" id="CHEBI:29950"/>
        <dbReference type="ChEBI" id="CHEBI:30616"/>
        <dbReference type="ChEBI" id="CHEBI:33019"/>
        <dbReference type="ChEBI" id="CHEBI:61963"/>
        <dbReference type="ChEBI" id="CHEBI:65315"/>
        <dbReference type="ChEBI" id="CHEBI:87170"/>
        <dbReference type="ChEBI" id="CHEBI:456215"/>
        <dbReference type="EC" id="2.8.1.13"/>
    </reaction>
</comment>
<comment type="subcellular location">
    <subcellularLocation>
        <location evidence="1">Cytoplasm</location>
    </subcellularLocation>
</comment>
<comment type="similarity">
    <text evidence="1">Belongs to the MnmA/TRMU family.</text>
</comment>
<evidence type="ECO:0000255" key="1">
    <source>
        <dbReference type="HAMAP-Rule" id="MF_00144"/>
    </source>
</evidence>
<feature type="chain" id="PRO_0000349643" description="tRNA-specific 2-thiouridylase MnmA 1">
    <location>
        <begin position="1"/>
        <end position="362"/>
    </location>
</feature>
<feature type="region of interest" description="Interaction with tRNA" evidence="1">
    <location>
        <begin position="151"/>
        <end position="153"/>
    </location>
</feature>
<feature type="active site" description="Nucleophile" evidence="1">
    <location>
        <position position="109"/>
    </location>
</feature>
<feature type="active site" description="Cysteine persulfide intermediate" evidence="1">
    <location>
        <position position="201"/>
    </location>
</feature>
<feature type="binding site" evidence="1">
    <location>
        <begin position="29"/>
        <end position="36"/>
    </location>
    <ligand>
        <name>ATP</name>
        <dbReference type="ChEBI" id="CHEBI:30616"/>
    </ligand>
</feature>
<feature type="binding site" evidence="1">
    <location>
        <position position="55"/>
    </location>
    <ligand>
        <name>ATP</name>
        <dbReference type="ChEBI" id="CHEBI:30616"/>
    </ligand>
</feature>
<feature type="binding site" evidence="1">
    <location>
        <position position="133"/>
    </location>
    <ligand>
        <name>ATP</name>
        <dbReference type="ChEBI" id="CHEBI:30616"/>
    </ligand>
</feature>
<feature type="site" description="Interaction with tRNA" evidence="1">
    <location>
        <position position="134"/>
    </location>
</feature>
<feature type="site" description="Interaction with tRNA" evidence="1">
    <location>
        <position position="343"/>
    </location>
</feature>
<feature type="disulfide bond" description="Alternate" evidence="1">
    <location>
        <begin position="109"/>
        <end position="201"/>
    </location>
</feature>
<reference key="1">
    <citation type="journal article" date="2002" name="J. Bacteriol.">
        <title>Genome sequence and analysis of the oral bacterium Fusobacterium nucleatum strain ATCC 25586.</title>
        <authorList>
            <person name="Kapatral V."/>
            <person name="Anderson I."/>
            <person name="Ivanova N."/>
            <person name="Reznik G."/>
            <person name="Los T."/>
            <person name="Lykidis A."/>
            <person name="Bhattacharyya A."/>
            <person name="Bartman A."/>
            <person name="Gardner W."/>
            <person name="Grechkin G."/>
            <person name="Zhu L."/>
            <person name="Vasieva O."/>
            <person name="Chu L."/>
            <person name="Kogan Y."/>
            <person name="Chaga O."/>
            <person name="Goltsman E."/>
            <person name="Bernal A."/>
            <person name="Larsen N."/>
            <person name="D'Souza M."/>
            <person name="Walunas T."/>
            <person name="Pusch G."/>
            <person name="Haselkorn R."/>
            <person name="Fonstein M."/>
            <person name="Kyrpides N.C."/>
            <person name="Overbeek R."/>
        </authorList>
    </citation>
    <scope>NUCLEOTIDE SEQUENCE [LARGE SCALE GENOMIC DNA]</scope>
    <source>
        <strain>ATCC 25586 / DSM 15643 / BCRC 10681 / CIP 101130 / JCM 8532 / KCTC 2640 / LMG 13131 / VPI 4355</strain>
    </source>
</reference>